<protein>
    <recommendedName>
        <fullName evidence="1">Protein Smg</fullName>
    </recommendedName>
</protein>
<organism>
    <name type="scientific">Salmonella paratyphi A (strain AKU_12601)</name>
    <dbReference type="NCBI Taxonomy" id="554290"/>
    <lineage>
        <taxon>Bacteria</taxon>
        <taxon>Pseudomonadati</taxon>
        <taxon>Pseudomonadota</taxon>
        <taxon>Gammaproteobacteria</taxon>
        <taxon>Enterobacterales</taxon>
        <taxon>Enterobacteriaceae</taxon>
        <taxon>Salmonella</taxon>
    </lineage>
</organism>
<sequence>MFDVLMYLFETYIHNEAELRVDQDRLERDLTDAGFDREDIYNALLWLEKLADYQDGLAEPMQLASDPLSMRIYTVEECERLDASCRGFLLFLEQIQVLNLETREMVIERVLALDTAEFDLEDLKWVILMVLFNIPGCENAYQQMEELLFEVNEGMLH</sequence>
<proteinExistence type="inferred from homology"/>
<evidence type="ECO:0000255" key="1">
    <source>
        <dbReference type="HAMAP-Rule" id="MF_00598"/>
    </source>
</evidence>
<feature type="chain" id="PRO_1000129903" description="Protein Smg">
    <location>
        <begin position="1"/>
        <end position="157"/>
    </location>
</feature>
<accession>B5BGV1</accession>
<dbReference type="EMBL" id="FM200053">
    <property type="protein sequence ID" value="CAR61301.1"/>
    <property type="molecule type" value="Genomic_DNA"/>
</dbReference>
<dbReference type="RefSeq" id="WP_000460663.1">
    <property type="nucleotide sequence ID" value="NC_011147.1"/>
</dbReference>
<dbReference type="SMR" id="B5BGV1"/>
<dbReference type="KEGG" id="sek:SSPA3050"/>
<dbReference type="HOGENOM" id="CLU_133242_0_0_6"/>
<dbReference type="Proteomes" id="UP000001869">
    <property type="component" value="Chromosome"/>
</dbReference>
<dbReference type="HAMAP" id="MF_00598">
    <property type="entry name" value="Smg"/>
    <property type="match status" value="1"/>
</dbReference>
<dbReference type="InterPro" id="IPR007456">
    <property type="entry name" value="Smg"/>
</dbReference>
<dbReference type="NCBIfam" id="NF002897">
    <property type="entry name" value="PRK03430.1"/>
    <property type="match status" value="1"/>
</dbReference>
<dbReference type="PANTHER" id="PTHR38692">
    <property type="entry name" value="PROTEIN SMG"/>
    <property type="match status" value="1"/>
</dbReference>
<dbReference type="PANTHER" id="PTHR38692:SF1">
    <property type="entry name" value="PROTEIN SMG"/>
    <property type="match status" value="1"/>
</dbReference>
<dbReference type="Pfam" id="PF04361">
    <property type="entry name" value="DUF494"/>
    <property type="match status" value="1"/>
</dbReference>
<name>SMG_SALPK</name>
<reference key="1">
    <citation type="journal article" date="2009" name="BMC Genomics">
        <title>Pseudogene accumulation in the evolutionary histories of Salmonella enterica serovars Paratyphi A and Typhi.</title>
        <authorList>
            <person name="Holt K.E."/>
            <person name="Thomson N.R."/>
            <person name="Wain J."/>
            <person name="Langridge G.C."/>
            <person name="Hasan R."/>
            <person name="Bhutta Z.A."/>
            <person name="Quail M.A."/>
            <person name="Norbertczak H."/>
            <person name="Walker D."/>
            <person name="Simmonds M."/>
            <person name="White B."/>
            <person name="Bason N."/>
            <person name="Mungall K."/>
            <person name="Dougan G."/>
            <person name="Parkhill J."/>
        </authorList>
    </citation>
    <scope>NUCLEOTIDE SEQUENCE [LARGE SCALE GENOMIC DNA]</scope>
    <source>
        <strain>AKU_12601</strain>
    </source>
</reference>
<gene>
    <name evidence="1" type="primary">smg</name>
    <name type="ordered locus">SSPA3050</name>
</gene>
<comment type="similarity">
    <text evidence="1">Belongs to the Smg family.</text>
</comment>